<protein>
    <recommendedName>
        <fullName>Keratin, type I cytoskeletal 28</fullName>
    </recommendedName>
    <alternativeName>
        <fullName>Cytokeratin-28</fullName>
        <shortName>CK-28</shortName>
    </alternativeName>
    <alternativeName>
        <fullName>Keratin-25D</fullName>
        <shortName>K25D</shortName>
    </alternativeName>
    <alternativeName>
        <fullName>Keratin-28</fullName>
        <shortName>K28</shortName>
    </alternativeName>
    <alternativeName>
        <fullName>Type I inner root sheath-specific keratin-K25irs4</fullName>
    </alternativeName>
</protein>
<sequence>MSLRFSGGSRHVGIQSGSLRPPSGGAGFAGSSVAGGSVAGSGFSWALGGTLGSAPGGSHATGALGNVSGVCFIGSEGGLLSGNEKVTMQNLNNRLASYLDNVKALEEANSELERKIKTWHEKYGPGSCRGLDRDYSKYHLTIEDLKSKIISSTAANANIILQIDNARLAADDFRLKYENELTLHQNVEADINGLRRVLDELTLCRTDQELQYESLSEEMTYLKKNHEEEMKVLQCAAGGNVNVEMNAAPGVDLTVLLNNMRAEYEALAEQNRRDAEAWFQEKSATLQQQISNDLGAATSARTELTELKRSLQTLEIELQSLSATKHSLECSLAETEGNYCSQLAQIQAQISALEEQLHQVRTETEGQKLEHEQLLDIKAHLEKEIETYCRLIDGDENSCSVSKGFESGTSGNSPKDVSKTTLVKTVVEEIDQRGKVLSSRIHSIEEKMSKMSNGKAEQRVPF</sequence>
<name>K1C28_MOUSE</name>
<gene>
    <name evidence="8" type="primary">Krt28</name>
    <name evidence="9" type="synonym">Krt25d</name>
</gene>
<proteinExistence type="evidence at protein level"/>
<dbReference type="EMBL" id="AB288231">
    <property type="protein sequence ID" value="BAF64536.1"/>
    <property type="molecule type" value="mRNA"/>
</dbReference>
<dbReference type="EMBL" id="AK014642">
    <property type="protein sequence ID" value="BAB29485.1"/>
    <property type="molecule type" value="mRNA"/>
</dbReference>
<dbReference type="EMBL" id="AL591165">
    <property type="status" value="NOT_ANNOTATED_CDS"/>
    <property type="molecule type" value="Genomic_DNA"/>
</dbReference>
<dbReference type="CCDS" id="CCDS48906.1"/>
<dbReference type="RefSeq" id="NP_081850.1">
    <property type="nucleotide sequence ID" value="NM_027574.2"/>
</dbReference>
<dbReference type="RefSeq" id="XP_036012881.1">
    <property type="nucleotide sequence ID" value="XM_036156988.1"/>
</dbReference>
<dbReference type="SMR" id="A6BLY7"/>
<dbReference type="BioGRID" id="214288">
    <property type="interactions" value="1"/>
</dbReference>
<dbReference type="FunCoup" id="A6BLY7">
    <property type="interactions" value="142"/>
</dbReference>
<dbReference type="STRING" id="10090.ENSMUSP00000006963"/>
<dbReference type="GlyGen" id="A6BLY7">
    <property type="glycosylation" value="1 site, 1 O-linked glycan (1 site)"/>
</dbReference>
<dbReference type="iPTMnet" id="A6BLY7"/>
<dbReference type="PhosphoSitePlus" id="A6BLY7"/>
<dbReference type="jPOST" id="A6BLY7"/>
<dbReference type="PaxDb" id="10090-ENSMUSP00000006963"/>
<dbReference type="PeptideAtlas" id="A6BLY7"/>
<dbReference type="ProteomicsDB" id="269165"/>
<dbReference type="Antibodypedia" id="28714">
    <property type="antibodies" value="84 antibodies from 19 providers"/>
</dbReference>
<dbReference type="DNASU" id="70843"/>
<dbReference type="Ensembl" id="ENSMUST00000006963.3">
    <property type="protein sequence ID" value="ENSMUSP00000006963.2"/>
    <property type="gene ID" value="ENSMUSG00000055937.2"/>
</dbReference>
<dbReference type="GeneID" id="70843"/>
<dbReference type="KEGG" id="mmu:70843"/>
<dbReference type="UCSC" id="uc007liq.2">
    <property type="organism name" value="mouse"/>
</dbReference>
<dbReference type="AGR" id="MGI:1918093"/>
<dbReference type="CTD" id="162605"/>
<dbReference type="MGI" id="MGI:1918093">
    <property type="gene designation" value="Krt28"/>
</dbReference>
<dbReference type="VEuPathDB" id="HostDB:ENSMUSG00000055937"/>
<dbReference type="eggNOG" id="ENOG502SHRG">
    <property type="taxonomic scope" value="Eukaryota"/>
</dbReference>
<dbReference type="GeneTree" id="ENSGT00940000162192"/>
<dbReference type="HOGENOM" id="CLU_012560_8_3_1"/>
<dbReference type="InParanoid" id="A6BLY7"/>
<dbReference type="OMA" id="FAGSNAC"/>
<dbReference type="OrthoDB" id="9532690at2759"/>
<dbReference type="PhylomeDB" id="A6BLY7"/>
<dbReference type="TreeFam" id="TF332742"/>
<dbReference type="Reactome" id="R-MMU-6805567">
    <property type="pathway name" value="Keratinization"/>
</dbReference>
<dbReference type="Reactome" id="R-MMU-6809371">
    <property type="pathway name" value="Formation of the cornified envelope"/>
</dbReference>
<dbReference type="BioGRID-ORCS" id="70843">
    <property type="hits" value="4 hits in 77 CRISPR screens"/>
</dbReference>
<dbReference type="PRO" id="PR:A6BLY7"/>
<dbReference type="Proteomes" id="UP000000589">
    <property type="component" value="Chromosome 11"/>
</dbReference>
<dbReference type="RNAct" id="A6BLY7">
    <property type="molecule type" value="protein"/>
</dbReference>
<dbReference type="Bgee" id="ENSMUSG00000055937">
    <property type="expression patterns" value="Expressed in hair follicle and 28 other cell types or tissues"/>
</dbReference>
<dbReference type="GO" id="GO:0005737">
    <property type="term" value="C:cytoplasm"/>
    <property type="evidence" value="ECO:0007669"/>
    <property type="project" value="UniProtKB-SubCell"/>
</dbReference>
<dbReference type="GO" id="GO:0005882">
    <property type="term" value="C:intermediate filament"/>
    <property type="evidence" value="ECO:0007669"/>
    <property type="project" value="UniProtKB-KW"/>
</dbReference>
<dbReference type="GO" id="GO:0005198">
    <property type="term" value="F:structural molecule activity"/>
    <property type="evidence" value="ECO:0007669"/>
    <property type="project" value="InterPro"/>
</dbReference>
<dbReference type="FunFam" id="1.20.5.1160:FF:000002">
    <property type="entry name" value="Type I keratin 10"/>
    <property type="match status" value="1"/>
</dbReference>
<dbReference type="FunFam" id="1.20.5.170:FF:000002">
    <property type="entry name" value="Type I keratin KA11"/>
    <property type="match status" value="1"/>
</dbReference>
<dbReference type="FunFam" id="1.20.5.500:FF:000001">
    <property type="entry name" value="Type II keratin 23"/>
    <property type="match status" value="1"/>
</dbReference>
<dbReference type="Gene3D" id="1.20.5.170">
    <property type="match status" value="1"/>
</dbReference>
<dbReference type="Gene3D" id="1.20.5.500">
    <property type="entry name" value="Single helix bin"/>
    <property type="match status" value="1"/>
</dbReference>
<dbReference type="Gene3D" id="1.20.5.1160">
    <property type="entry name" value="Vasodilator-stimulated phosphoprotein"/>
    <property type="match status" value="1"/>
</dbReference>
<dbReference type="InterPro" id="IPR039008">
    <property type="entry name" value="IF_rod_dom"/>
</dbReference>
<dbReference type="InterPro" id="IPR002957">
    <property type="entry name" value="Keratin_I"/>
</dbReference>
<dbReference type="PANTHER" id="PTHR23239">
    <property type="entry name" value="INTERMEDIATE FILAMENT"/>
    <property type="match status" value="1"/>
</dbReference>
<dbReference type="PANTHER" id="PTHR23239:SF215">
    <property type="entry name" value="KERATIN, TYPE I CYTOSKELETAL 28"/>
    <property type="match status" value="1"/>
</dbReference>
<dbReference type="Pfam" id="PF00038">
    <property type="entry name" value="Filament"/>
    <property type="match status" value="1"/>
</dbReference>
<dbReference type="PRINTS" id="PR01248">
    <property type="entry name" value="TYPE1KERATIN"/>
</dbReference>
<dbReference type="SMART" id="SM01391">
    <property type="entry name" value="Filament"/>
    <property type="match status" value="1"/>
</dbReference>
<dbReference type="SUPFAM" id="SSF64593">
    <property type="entry name" value="Intermediate filament protein, coiled coil region"/>
    <property type="match status" value="2"/>
</dbReference>
<dbReference type="PROSITE" id="PS51842">
    <property type="entry name" value="IF_ROD_2"/>
    <property type="match status" value="1"/>
</dbReference>
<accession>A6BLY7</accession>
<accession>Q9D637</accession>
<organism>
    <name type="scientific">Mus musculus</name>
    <name type="common">Mouse</name>
    <dbReference type="NCBI Taxonomy" id="10090"/>
    <lineage>
        <taxon>Eukaryota</taxon>
        <taxon>Metazoa</taxon>
        <taxon>Chordata</taxon>
        <taxon>Craniata</taxon>
        <taxon>Vertebrata</taxon>
        <taxon>Euteleostomi</taxon>
        <taxon>Mammalia</taxon>
        <taxon>Eutheria</taxon>
        <taxon>Euarchontoglires</taxon>
        <taxon>Glires</taxon>
        <taxon>Rodentia</taxon>
        <taxon>Myomorpha</taxon>
        <taxon>Muroidea</taxon>
        <taxon>Muridae</taxon>
        <taxon>Murinae</taxon>
        <taxon>Mus</taxon>
        <taxon>Mus</taxon>
    </lineage>
</organism>
<keyword id="KW-0175">Coiled coil</keyword>
<keyword id="KW-0963">Cytoplasm</keyword>
<keyword id="KW-0403">Intermediate filament</keyword>
<keyword id="KW-0416">Keratin</keyword>
<keyword id="KW-1185">Reference proteome</keyword>
<reference evidence="6 8" key="1">
    <citation type="journal article" date="2007" name="Genomics">
        <title>Mutations in the helix termination motif of mouse type I IRS keratin genes impair the assembly of keratin intermediate filament.</title>
        <authorList>
            <person name="Tanaka S."/>
            <person name="Miura I."/>
            <person name="Yoshiki A."/>
            <person name="Kato Y."/>
            <person name="Yokoyama H."/>
            <person name="Shinogi A."/>
            <person name="Masuya H."/>
            <person name="Wakana S."/>
            <person name="Tamura M."/>
            <person name="Shiroishi T."/>
        </authorList>
    </citation>
    <scope>NUCLEOTIDE SEQUENCE [MRNA]</scope>
    <scope>FUNCTION</scope>
    <source>
        <strain evidence="8">C57BL/6J</strain>
        <tissue evidence="8">Skin</tissue>
    </source>
</reference>
<reference evidence="7" key="2">
    <citation type="journal article" date="2005" name="Science">
        <title>The transcriptional landscape of the mammalian genome.</title>
        <authorList>
            <person name="Carninci P."/>
            <person name="Kasukawa T."/>
            <person name="Katayama S."/>
            <person name="Gough J."/>
            <person name="Frith M.C."/>
            <person name="Maeda N."/>
            <person name="Oyama R."/>
            <person name="Ravasi T."/>
            <person name="Lenhard B."/>
            <person name="Wells C."/>
            <person name="Kodzius R."/>
            <person name="Shimokawa K."/>
            <person name="Bajic V.B."/>
            <person name="Brenner S.E."/>
            <person name="Batalov S."/>
            <person name="Forrest A.R."/>
            <person name="Zavolan M."/>
            <person name="Davis M.J."/>
            <person name="Wilming L.G."/>
            <person name="Aidinis V."/>
            <person name="Allen J.E."/>
            <person name="Ambesi-Impiombato A."/>
            <person name="Apweiler R."/>
            <person name="Aturaliya R.N."/>
            <person name="Bailey T.L."/>
            <person name="Bansal M."/>
            <person name="Baxter L."/>
            <person name="Beisel K.W."/>
            <person name="Bersano T."/>
            <person name="Bono H."/>
            <person name="Chalk A.M."/>
            <person name="Chiu K.P."/>
            <person name="Choudhary V."/>
            <person name="Christoffels A."/>
            <person name="Clutterbuck D.R."/>
            <person name="Crowe M.L."/>
            <person name="Dalla E."/>
            <person name="Dalrymple B.P."/>
            <person name="de Bono B."/>
            <person name="Della Gatta G."/>
            <person name="di Bernardo D."/>
            <person name="Down T."/>
            <person name="Engstrom P."/>
            <person name="Fagiolini M."/>
            <person name="Faulkner G."/>
            <person name="Fletcher C.F."/>
            <person name="Fukushima T."/>
            <person name="Furuno M."/>
            <person name="Futaki S."/>
            <person name="Gariboldi M."/>
            <person name="Georgii-Hemming P."/>
            <person name="Gingeras T.R."/>
            <person name="Gojobori T."/>
            <person name="Green R.E."/>
            <person name="Gustincich S."/>
            <person name="Harbers M."/>
            <person name="Hayashi Y."/>
            <person name="Hensch T.K."/>
            <person name="Hirokawa N."/>
            <person name="Hill D."/>
            <person name="Huminiecki L."/>
            <person name="Iacono M."/>
            <person name="Ikeo K."/>
            <person name="Iwama A."/>
            <person name="Ishikawa T."/>
            <person name="Jakt M."/>
            <person name="Kanapin A."/>
            <person name="Katoh M."/>
            <person name="Kawasawa Y."/>
            <person name="Kelso J."/>
            <person name="Kitamura H."/>
            <person name="Kitano H."/>
            <person name="Kollias G."/>
            <person name="Krishnan S.P."/>
            <person name="Kruger A."/>
            <person name="Kummerfeld S.K."/>
            <person name="Kurochkin I.V."/>
            <person name="Lareau L.F."/>
            <person name="Lazarevic D."/>
            <person name="Lipovich L."/>
            <person name="Liu J."/>
            <person name="Liuni S."/>
            <person name="McWilliam S."/>
            <person name="Madan Babu M."/>
            <person name="Madera M."/>
            <person name="Marchionni L."/>
            <person name="Matsuda H."/>
            <person name="Matsuzawa S."/>
            <person name="Miki H."/>
            <person name="Mignone F."/>
            <person name="Miyake S."/>
            <person name="Morris K."/>
            <person name="Mottagui-Tabar S."/>
            <person name="Mulder N."/>
            <person name="Nakano N."/>
            <person name="Nakauchi H."/>
            <person name="Ng P."/>
            <person name="Nilsson R."/>
            <person name="Nishiguchi S."/>
            <person name="Nishikawa S."/>
            <person name="Nori F."/>
            <person name="Ohara O."/>
            <person name="Okazaki Y."/>
            <person name="Orlando V."/>
            <person name="Pang K.C."/>
            <person name="Pavan W.J."/>
            <person name="Pavesi G."/>
            <person name="Pesole G."/>
            <person name="Petrovsky N."/>
            <person name="Piazza S."/>
            <person name="Reed J."/>
            <person name="Reid J.F."/>
            <person name="Ring B.Z."/>
            <person name="Ringwald M."/>
            <person name="Rost B."/>
            <person name="Ruan Y."/>
            <person name="Salzberg S.L."/>
            <person name="Sandelin A."/>
            <person name="Schneider C."/>
            <person name="Schoenbach C."/>
            <person name="Sekiguchi K."/>
            <person name="Semple C.A."/>
            <person name="Seno S."/>
            <person name="Sessa L."/>
            <person name="Sheng Y."/>
            <person name="Shibata Y."/>
            <person name="Shimada H."/>
            <person name="Shimada K."/>
            <person name="Silva D."/>
            <person name="Sinclair B."/>
            <person name="Sperling S."/>
            <person name="Stupka E."/>
            <person name="Sugiura K."/>
            <person name="Sultana R."/>
            <person name="Takenaka Y."/>
            <person name="Taki K."/>
            <person name="Tammoja K."/>
            <person name="Tan S.L."/>
            <person name="Tang S."/>
            <person name="Taylor M.S."/>
            <person name="Tegner J."/>
            <person name="Teichmann S.A."/>
            <person name="Ueda H.R."/>
            <person name="van Nimwegen E."/>
            <person name="Verardo R."/>
            <person name="Wei C.L."/>
            <person name="Yagi K."/>
            <person name="Yamanishi H."/>
            <person name="Zabarovsky E."/>
            <person name="Zhu S."/>
            <person name="Zimmer A."/>
            <person name="Hide W."/>
            <person name="Bult C."/>
            <person name="Grimmond S.M."/>
            <person name="Teasdale R.D."/>
            <person name="Liu E.T."/>
            <person name="Brusic V."/>
            <person name="Quackenbush J."/>
            <person name="Wahlestedt C."/>
            <person name="Mattick J.S."/>
            <person name="Hume D.A."/>
            <person name="Kai C."/>
            <person name="Sasaki D."/>
            <person name="Tomaru Y."/>
            <person name="Fukuda S."/>
            <person name="Kanamori-Katayama M."/>
            <person name="Suzuki M."/>
            <person name="Aoki J."/>
            <person name="Arakawa T."/>
            <person name="Iida J."/>
            <person name="Imamura K."/>
            <person name="Itoh M."/>
            <person name="Kato T."/>
            <person name="Kawaji H."/>
            <person name="Kawagashira N."/>
            <person name="Kawashima T."/>
            <person name="Kojima M."/>
            <person name="Kondo S."/>
            <person name="Konno H."/>
            <person name="Nakano K."/>
            <person name="Ninomiya N."/>
            <person name="Nishio T."/>
            <person name="Okada M."/>
            <person name="Plessy C."/>
            <person name="Shibata K."/>
            <person name="Shiraki T."/>
            <person name="Suzuki S."/>
            <person name="Tagami M."/>
            <person name="Waki K."/>
            <person name="Watahiki A."/>
            <person name="Okamura-Oho Y."/>
            <person name="Suzuki H."/>
            <person name="Kawai J."/>
            <person name="Hayashizaki Y."/>
        </authorList>
    </citation>
    <scope>NUCLEOTIDE SEQUENCE [LARGE SCALE MRNA]</scope>
    <source>
        <strain evidence="7">C57BL/6J</strain>
        <tissue evidence="7">Skin</tissue>
    </source>
</reference>
<reference key="3">
    <citation type="journal article" date="2009" name="PLoS Biol.">
        <title>Lineage-specific biology revealed by a finished genome assembly of the mouse.</title>
        <authorList>
            <person name="Church D.M."/>
            <person name="Goodstadt L."/>
            <person name="Hillier L.W."/>
            <person name="Zody M.C."/>
            <person name="Goldstein S."/>
            <person name="She X."/>
            <person name="Bult C.J."/>
            <person name="Agarwala R."/>
            <person name="Cherry J.L."/>
            <person name="DiCuccio M."/>
            <person name="Hlavina W."/>
            <person name="Kapustin Y."/>
            <person name="Meric P."/>
            <person name="Maglott D."/>
            <person name="Birtle Z."/>
            <person name="Marques A.C."/>
            <person name="Graves T."/>
            <person name="Zhou S."/>
            <person name="Teague B."/>
            <person name="Potamousis K."/>
            <person name="Churas C."/>
            <person name="Place M."/>
            <person name="Herschleb J."/>
            <person name="Runnheim R."/>
            <person name="Forrest D."/>
            <person name="Amos-Landgraf J."/>
            <person name="Schwartz D.C."/>
            <person name="Cheng Z."/>
            <person name="Lindblad-Toh K."/>
            <person name="Eichler E.E."/>
            <person name="Ponting C.P."/>
        </authorList>
    </citation>
    <scope>NUCLEOTIDE SEQUENCE [LARGE SCALE GENOMIC DNA]</scope>
    <source>
        <strain>C57BL/6J</strain>
    </source>
</reference>
<reference evidence="6" key="4">
    <citation type="journal article" date="2004" name="Br. J. Dermatol.">
        <title>Functional analysis of keratin components in the mouse hair follicle inner root sheath.</title>
        <authorList>
            <person name="Porter R.M."/>
            <person name="Gandhi M."/>
            <person name="Wilson N.J."/>
            <person name="Wood P."/>
            <person name="McLean W.H.I."/>
            <person name="Lane E.B."/>
        </authorList>
    </citation>
    <scope>FUNCTION</scope>
    <scope>SUBCELLULAR LOCATION</scope>
    <scope>TISSUE SPECIFICITY</scope>
</reference>
<feature type="chain" id="PRO_0000312706" description="Keratin, type I cytoskeletal 28">
    <location>
        <begin position="1"/>
        <end position="462"/>
    </location>
</feature>
<feature type="domain" description="IF rod" evidence="2">
    <location>
        <begin position="84"/>
        <end position="399"/>
    </location>
</feature>
<feature type="region of interest" description="Head" evidence="1">
    <location>
        <begin position="1"/>
        <end position="83"/>
    </location>
</feature>
<feature type="region of interest" description="Disordered" evidence="3">
    <location>
        <begin position="1"/>
        <end position="26"/>
    </location>
</feature>
<feature type="region of interest" description="Coil 1A" evidence="1">
    <location>
        <begin position="84"/>
        <end position="119"/>
    </location>
</feature>
<feature type="region of interest" description="Linker 1" evidence="1">
    <location>
        <begin position="120"/>
        <end position="141"/>
    </location>
</feature>
<feature type="region of interest" description="Coil 1B" evidence="1">
    <location>
        <begin position="142"/>
        <end position="233"/>
    </location>
</feature>
<feature type="region of interest" description="Linker 12" evidence="1">
    <location>
        <begin position="234"/>
        <end position="256"/>
    </location>
</feature>
<feature type="region of interest" description="Coil 2" evidence="1">
    <location>
        <begin position="257"/>
        <end position="395"/>
    </location>
</feature>
<feature type="region of interest" description="Tail" evidence="1">
    <location>
        <begin position="396"/>
        <end position="462"/>
    </location>
</feature>
<comment type="function">
    <text evidence="4 5">Essential for the proper assembly of types I and II keratin protein complexes and the formation of keratin intermediate filaments in the inner root sheath (irs).</text>
</comment>
<comment type="subunit">
    <text evidence="6">Heterotetramer of two type I and two type II keratins.</text>
</comment>
<comment type="subcellular location">
    <subcellularLocation>
        <location evidence="4">Cytoplasm</location>
    </subcellularLocation>
</comment>
<comment type="tissue specificity">
    <text evidence="4">In the hair follicle and bulb, uniformly expressed in all three layers of the inner root sheath (the Henle layer, the Huxley layer and the cuticle) and observed in matrix cells (at protein level).</text>
</comment>
<comment type="miscellaneous">
    <text evidence="6">There are two types of cytoskeletal and microfibrillar keratin: I (acidic; 40-55 kDa) and II (neutral to basic; 56-70 kDa).</text>
</comment>
<comment type="similarity">
    <text evidence="2">Belongs to the intermediate filament family.</text>
</comment>
<evidence type="ECO:0000255" key="1"/>
<evidence type="ECO:0000255" key="2">
    <source>
        <dbReference type="PROSITE-ProRule" id="PRU01188"/>
    </source>
</evidence>
<evidence type="ECO:0000256" key="3">
    <source>
        <dbReference type="SAM" id="MobiDB-lite"/>
    </source>
</evidence>
<evidence type="ECO:0000269" key="4">
    <source>
    </source>
</evidence>
<evidence type="ECO:0000269" key="5">
    <source>
    </source>
</evidence>
<evidence type="ECO:0000305" key="6"/>
<evidence type="ECO:0000312" key="7">
    <source>
        <dbReference type="EMBL" id="BAB29485.1"/>
    </source>
</evidence>
<evidence type="ECO:0000312" key="8">
    <source>
        <dbReference type="EMBL" id="BAF64536.1"/>
    </source>
</evidence>
<evidence type="ECO:0000312" key="9">
    <source>
        <dbReference type="MGI" id="MGI:1918093"/>
    </source>
</evidence>